<keyword id="KW-1185">Reference proteome</keyword>
<gene>
    <name type="ordered locus">MT2734.1</name>
</gene>
<proteinExistence type="predicted"/>
<organism>
    <name type="scientific">Mycobacterium tuberculosis (strain CDC 1551 / Oshkosh)</name>
    <dbReference type="NCBI Taxonomy" id="83331"/>
    <lineage>
        <taxon>Bacteria</taxon>
        <taxon>Bacillati</taxon>
        <taxon>Actinomycetota</taxon>
        <taxon>Actinomycetes</taxon>
        <taxon>Mycobacteriales</taxon>
        <taxon>Mycobacteriaceae</taxon>
        <taxon>Mycobacterium</taxon>
        <taxon>Mycobacterium tuberculosis complex</taxon>
    </lineage>
</organism>
<reference key="1">
    <citation type="journal article" date="2002" name="J. Bacteriol.">
        <title>Whole-genome comparison of Mycobacterium tuberculosis clinical and laboratory strains.</title>
        <authorList>
            <person name="Fleischmann R.D."/>
            <person name="Alland D."/>
            <person name="Eisen J.A."/>
            <person name="Carpenter L."/>
            <person name="White O."/>
            <person name="Peterson J.D."/>
            <person name="DeBoy R.T."/>
            <person name="Dodson R.J."/>
            <person name="Gwinn M.L."/>
            <person name="Haft D.H."/>
            <person name="Hickey E.K."/>
            <person name="Kolonay J.F."/>
            <person name="Nelson W.C."/>
            <person name="Umayam L.A."/>
            <person name="Ermolaeva M.D."/>
            <person name="Salzberg S.L."/>
            <person name="Delcher A."/>
            <person name="Utterback T.R."/>
            <person name="Weidman J.F."/>
            <person name="Khouri H.M."/>
            <person name="Gill J."/>
            <person name="Mikula A."/>
            <person name="Bishai W."/>
            <person name="Jacobs W.R. Jr."/>
            <person name="Venter J.C."/>
            <person name="Fraser C.M."/>
        </authorList>
    </citation>
    <scope>NUCLEOTIDE SEQUENCE [LARGE SCALE GENOMIC DNA]</scope>
    <source>
        <strain>CDC 1551 / Oshkosh</strain>
    </source>
</reference>
<accession>P9WL46</accession>
<accession>L0TAI3</accession>
<accession>P71955</accession>
<protein>
    <recommendedName>
        <fullName>Uncharacterized protein MT2734.1</fullName>
    </recommendedName>
</protein>
<comment type="sequence caution" evidence="1">
    <conflict type="erroneous initiation">
        <sequence resource="EMBL-CDS" id="AAK47049"/>
    </conflict>
</comment>
<feature type="chain" id="PRO_0000427542" description="Uncharacterized protein MT2734.1">
    <location>
        <begin position="1"/>
        <end position="120"/>
    </location>
</feature>
<dbReference type="EMBL" id="AE000516">
    <property type="protein sequence ID" value="AAK47049.1"/>
    <property type="status" value="ALT_INIT"/>
    <property type="molecule type" value="Genomic_DNA"/>
</dbReference>
<dbReference type="PIR" id="F70966">
    <property type="entry name" value="F70966"/>
</dbReference>
<dbReference type="RefSeq" id="WP_003900543.1">
    <property type="nucleotide sequence ID" value="NZ_KK341227.1"/>
</dbReference>
<dbReference type="KEGG" id="mtc:MT2734.1"/>
<dbReference type="PATRIC" id="fig|83331.31.peg.2945"/>
<dbReference type="HOGENOM" id="CLU_2047122_0_0_11"/>
<dbReference type="Proteomes" id="UP000001020">
    <property type="component" value="Chromosome"/>
</dbReference>
<name>Y2658_MYCTO</name>
<evidence type="ECO:0000305" key="1"/>
<sequence length="120" mass="13314">MADAVKYVVMCNCDDEPGALIIAWIDDERPAGGHIQMRSNTRFTETQWGRHIEWKLECRACRKYAPISEMTAAAILDGFGAKLHELRTSTIPDADDPSIAEARHVIPFSALCLRLSQLGG</sequence>